<gene>
    <name evidence="1" type="primary">thrS</name>
    <name type="ordered locus">CA_C2362</name>
</gene>
<dbReference type="EC" id="6.1.1.3" evidence="1"/>
<dbReference type="EMBL" id="AE001437">
    <property type="protein sequence ID" value="AAK80318.1"/>
    <property type="molecule type" value="Genomic_DNA"/>
</dbReference>
<dbReference type="PIR" id="C97191">
    <property type="entry name" value="C97191"/>
</dbReference>
<dbReference type="RefSeq" id="NP_348978.1">
    <property type="nucleotide sequence ID" value="NC_003030.1"/>
</dbReference>
<dbReference type="RefSeq" id="WP_010965659.1">
    <property type="nucleotide sequence ID" value="NC_003030.1"/>
</dbReference>
<dbReference type="SMR" id="Q97GK4"/>
<dbReference type="STRING" id="272562.CA_C2362"/>
<dbReference type="GeneID" id="44998837"/>
<dbReference type="KEGG" id="cac:CA_C2362"/>
<dbReference type="PATRIC" id="fig|272562.8.peg.2558"/>
<dbReference type="eggNOG" id="COG0441">
    <property type="taxonomic scope" value="Bacteria"/>
</dbReference>
<dbReference type="HOGENOM" id="CLU_008554_0_1_9"/>
<dbReference type="OrthoDB" id="9802304at2"/>
<dbReference type="Proteomes" id="UP000000814">
    <property type="component" value="Chromosome"/>
</dbReference>
<dbReference type="GO" id="GO:0005737">
    <property type="term" value="C:cytoplasm"/>
    <property type="evidence" value="ECO:0007669"/>
    <property type="project" value="UniProtKB-SubCell"/>
</dbReference>
<dbReference type="GO" id="GO:0005524">
    <property type="term" value="F:ATP binding"/>
    <property type="evidence" value="ECO:0007669"/>
    <property type="project" value="UniProtKB-UniRule"/>
</dbReference>
<dbReference type="GO" id="GO:0140096">
    <property type="term" value="F:catalytic activity, acting on a protein"/>
    <property type="evidence" value="ECO:0007669"/>
    <property type="project" value="UniProtKB-ARBA"/>
</dbReference>
<dbReference type="GO" id="GO:0046872">
    <property type="term" value="F:metal ion binding"/>
    <property type="evidence" value="ECO:0007669"/>
    <property type="project" value="UniProtKB-KW"/>
</dbReference>
<dbReference type="GO" id="GO:0004829">
    <property type="term" value="F:threonine-tRNA ligase activity"/>
    <property type="evidence" value="ECO:0007669"/>
    <property type="project" value="UniProtKB-UniRule"/>
</dbReference>
<dbReference type="GO" id="GO:0016740">
    <property type="term" value="F:transferase activity"/>
    <property type="evidence" value="ECO:0007669"/>
    <property type="project" value="UniProtKB-ARBA"/>
</dbReference>
<dbReference type="GO" id="GO:0000049">
    <property type="term" value="F:tRNA binding"/>
    <property type="evidence" value="ECO:0007669"/>
    <property type="project" value="UniProtKB-KW"/>
</dbReference>
<dbReference type="GO" id="GO:0006435">
    <property type="term" value="P:threonyl-tRNA aminoacylation"/>
    <property type="evidence" value="ECO:0007669"/>
    <property type="project" value="UniProtKB-UniRule"/>
</dbReference>
<dbReference type="CDD" id="cd01667">
    <property type="entry name" value="TGS_ThrRS"/>
    <property type="match status" value="1"/>
</dbReference>
<dbReference type="CDD" id="cd00860">
    <property type="entry name" value="ThrRS_anticodon"/>
    <property type="match status" value="1"/>
</dbReference>
<dbReference type="CDD" id="cd00771">
    <property type="entry name" value="ThrRS_core"/>
    <property type="match status" value="1"/>
</dbReference>
<dbReference type="FunFam" id="3.10.20.30:FF:000005">
    <property type="entry name" value="Threonine--tRNA ligase"/>
    <property type="match status" value="1"/>
</dbReference>
<dbReference type="FunFam" id="3.30.54.20:FF:000002">
    <property type="entry name" value="Threonine--tRNA ligase"/>
    <property type="match status" value="1"/>
</dbReference>
<dbReference type="FunFam" id="3.30.930.10:FF:000002">
    <property type="entry name" value="Threonine--tRNA ligase"/>
    <property type="match status" value="1"/>
</dbReference>
<dbReference type="FunFam" id="3.40.50.800:FF:000001">
    <property type="entry name" value="Threonine--tRNA ligase"/>
    <property type="match status" value="1"/>
</dbReference>
<dbReference type="FunFam" id="3.30.980.10:FF:000005">
    <property type="entry name" value="Threonyl-tRNA synthetase, mitochondrial"/>
    <property type="match status" value="1"/>
</dbReference>
<dbReference type="Gene3D" id="3.10.20.30">
    <property type="match status" value="1"/>
</dbReference>
<dbReference type="Gene3D" id="3.30.54.20">
    <property type="match status" value="1"/>
</dbReference>
<dbReference type="Gene3D" id="3.40.50.800">
    <property type="entry name" value="Anticodon-binding domain"/>
    <property type="match status" value="1"/>
</dbReference>
<dbReference type="Gene3D" id="3.30.930.10">
    <property type="entry name" value="Bira Bifunctional Protein, Domain 2"/>
    <property type="match status" value="1"/>
</dbReference>
<dbReference type="Gene3D" id="3.30.980.10">
    <property type="entry name" value="Threonyl-trna Synthetase, Chain A, domain 2"/>
    <property type="match status" value="1"/>
</dbReference>
<dbReference type="HAMAP" id="MF_00184">
    <property type="entry name" value="Thr_tRNA_synth"/>
    <property type="match status" value="1"/>
</dbReference>
<dbReference type="InterPro" id="IPR002314">
    <property type="entry name" value="aa-tRNA-synt_IIb"/>
</dbReference>
<dbReference type="InterPro" id="IPR006195">
    <property type="entry name" value="aa-tRNA-synth_II"/>
</dbReference>
<dbReference type="InterPro" id="IPR045864">
    <property type="entry name" value="aa-tRNA-synth_II/BPL/LPL"/>
</dbReference>
<dbReference type="InterPro" id="IPR004154">
    <property type="entry name" value="Anticodon-bd"/>
</dbReference>
<dbReference type="InterPro" id="IPR036621">
    <property type="entry name" value="Anticodon-bd_dom_sf"/>
</dbReference>
<dbReference type="InterPro" id="IPR012675">
    <property type="entry name" value="Beta-grasp_dom_sf"/>
</dbReference>
<dbReference type="InterPro" id="IPR004095">
    <property type="entry name" value="TGS"/>
</dbReference>
<dbReference type="InterPro" id="IPR012676">
    <property type="entry name" value="TGS-like"/>
</dbReference>
<dbReference type="InterPro" id="IPR002320">
    <property type="entry name" value="Thr-tRNA-ligase_IIa"/>
</dbReference>
<dbReference type="InterPro" id="IPR018163">
    <property type="entry name" value="Thr/Ala-tRNA-synth_IIc_edit"/>
</dbReference>
<dbReference type="InterPro" id="IPR047246">
    <property type="entry name" value="ThrRS_anticodon"/>
</dbReference>
<dbReference type="InterPro" id="IPR033728">
    <property type="entry name" value="ThrRS_core"/>
</dbReference>
<dbReference type="InterPro" id="IPR012947">
    <property type="entry name" value="tRNA_SAD"/>
</dbReference>
<dbReference type="NCBIfam" id="TIGR00418">
    <property type="entry name" value="thrS"/>
    <property type="match status" value="1"/>
</dbReference>
<dbReference type="PANTHER" id="PTHR11451:SF44">
    <property type="entry name" value="THREONINE--TRNA LIGASE, CHLOROPLASTIC_MITOCHONDRIAL 2"/>
    <property type="match status" value="1"/>
</dbReference>
<dbReference type="PANTHER" id="PTHR11451">
    <property type="entry name" value="THREONINE-TRNA LIGASE"/>
    <property type="match status" value="1"/>
</dbReference>
<dbReference type="Pfam" id="PF03129">
    <property type="entry name" value="HGTP_anticodon"/>
    <property type="match status" value="1"/>
</dbReference>
<dbReference type="Pfam" id="PF02824">
    <property type="entry name" value="TGS"/>
    <property type="match status" value="1"/>
</dbReference>
<dbReference type="Pfam" id="PF00587">
    <property type="entry name" value="tRNA-synt_2b"/>
    <property type="match status" value="1"/>
</dbReference>
<dbReference type="Pfam" id="PF07973">
    <property type="entry name" value="tRNA_SAD"/>
    <property type="match status" value="1"/>
</dbReference>
<dbReference type="PRINTS" id="PR01047">
    <property type="entry name" value="TRNASYNTHTHR"/>
</dbReference>
<dbReference type="SMART" id="SM00863">
    <property type="entry name" value="tRNA_SAD"/>
    <property type="match status" value="1"/>
</dbReference>
<dbReference type="SUPFAM" id="SSF52954">
    <property type="entry name" value="Class II aaRS ABD-related"/>
    <property type="match status" value="1"/>
</dbReference>
<dbReference type="SUPFAM" id="SSF55681">
    <property type="entry name" value="Class II aaRS and biotin synthetases"/>
    <property type="match status" value="1"/>
</dbReference>
<dbReference type="SUPFAM" id="SSF81271">
    <property type="entry name" value="TGS-like"/>
    <property type="match status" value="1"/>
</dbReference>
<dbReference type="SUPFAM" id="SSF55186">
    <property type="entry name" value="ThrRS/AlaRS common domain"/>
    <property type="match status" value="1"/>
</dbReference>
<dbReference type="PROSITE" id="PS50862">
    <property type="entry name" value="AA_TRNA_LIGASE_II"/>
    <property type="match status" value="1"/>
</dbReference>
<dbReference type="PROSITE" id="PS51880">
    <property type="entry name" value="TGS"/>
    <property type="match status" value="1"/>
</dbReference>
<keyword id="KW-0030">Aminoacyl-tRNA synthetase</keyword>
<keyword id="KW-0067">ATP-binding</keyword>
<keyword id="KW-0963">Cytoplasm</keyword>
<keyword id="KW-0436">Ligase</keyword>
<keyword id="KW-0479">Metal-binding</keyword>
<keyword id="KW-0547">Nucleotide-binding</keyword>
<keyword id="KW-0648">Protein biosynthesis</keyword>
<keyword id="KW-1185">Reference proteome</keyword>
<keyword id="KW-0694">RNA-binding</keyword>
<keyword id="KW-0820">tRNA-binding</keyword>
<keyword id="KW-0862">Zinc</keyword>
<organism>
    <name type="scientific">Clostridium acetobutylicum (strain ATCC 824 / DSM 792 / JCM 1419 / IAM 19013 / LMG 5710 / NBRC 13948 / NRRL B-527 / VKM B-1787 / 2291 / W)</name>
    <dbReference type="NCBI Taxonomy" id="272562"/>
    <lineage>
        <taxon>Bacteria</taxon>
        <taxon>Bacillati</taxon>
        <taxon>Bacillota</taxon>
        <taxon>Clostridia</taxon>
        <taxon>Eubacteriales</taxon>
        <taxon>Clostridiaceae</taxon>
        <taxon>Clostridium</taxon>
    </lineage>
</organism>
<reference key="1">
    <citation type="journal article" date="2001" name="J. Bacteriol.">
        <title>Genome sequence and comparative analysis of the solvent-producing bacterium Clostridium acetobutylicum.</title>
        <authorList>
            <person name="Noelling J."/>
            <person name="Breton G."/>
            <person name="Omelchenko M.V."/>
            <person name="Makarova K.S."/>
            <person name="Zeng Q."/>
            <person name="Gibson R."/>
            <person name="Lee H.M."/>
            <person name="Dubois J."/>
            <person name="Qiu D."/>
            <person name="Hitti J."/>
            <person name="Wolf Y.I."/>
            <person name="Tatusov R.L."/>
            <person name="Sabathe F."/>
            <person name="Doucette-Stamm L.A."/>
            <person name="Soucaille P."/>
            <person name="Daly M.J."/>
            <person name="Bennett G.N."/>
            <person name="Koonin E.V."/>
            <person name="Smith D.R."/>
        </authorList>
    </citation>
    <scope>NUCLEOTIDE SEQUENCE [LARGE SCALE GENOMIC DNA]</scope>
    <source>
        <strain>ATCC 824 / DSM 792 / JCM 1419 / IAM 19013 / LMG 5710 / NBRC 13948 / NRRL B-527 / VKM B-1787 / 2291 / W</strain>
    </source>
</reference>
<proteinExistence type="inferred from homology"/>
<sequence>MIKVTLKDGKVMEFENTTTPGDVAKAISPGLYKKAISAKINGKRAELMTNIDKDCNLEILTFDDEDGKWTLRHTASHILAQAIKRLYPEAKLAIGPAIDSGFYYDIDADFSFTEEMFAKIEKEMNKIIKENLKLERFELPREKAIEYMEEKKEPYKVELIKDLPEDAVISFYKQGEFVDLCAGPHVESTAKVKVIKLMSVAGAYWRGNEKNKMLQRIYGTAFTKKADLDDYINMLEEAKKRDHRKIGKELDLFTMHEEGPGFPFFHPKGMVLKNLLLNYWREVHDKAGYDEISTPIILNEALWHQSGHWDHYKENMYFTKIDEADYAIKPMNCPGSILVYKDNIHSYRELPIKLAEIGLVHRHEKSGALHGLMRVRCFNQDDAHIFMTKEQITEEILGVIKLIDSFYKVFGFEYYVELSTRPEDSMGSDEDWEAATNGLINALNAANLEYIVNEGDGAFYGPKIDFHLKDCIGRTWQCGTIQLDFQMPERFDINYIGADGEKHRPVMVHRVVFGSIERFIGILIEHYAGAFPTWLAPVQVKVMNITDSQVEYVDAISEKLKEAGIRVEKDVRNEKIGYKIREAQLKKVPYMIVIGDKEIKEGIISVRSRKEGDLGSMNIEDFIFRINAEVKEKISSI</sequence>
<accession>Q97GK4</accession>
<protein>
    <recommendedName>
        <fullName evidence="1">Threonine--tRNA ligase</fullName>
        <ecNumber evidence="1">6.1.1.3</ecNumber>
    </recommendedName>
    <alternativeName>
        <fullName evidence="1">Threonyl-tRNA synthetase</fullName>
        <shortName evidence="1">ThrRS</shortName>
    </alternativeName>
</protein>
<comment type="function">
    <text evidence="1">Catalyzes the attachment of threonine to tRNA(Thr) in a two-step reaction: L-threonine is first activated by ATP to form Thr-AMP and then transferred to the acceptor end of tRNA(Thr). Also edits incorrectly charged L-seryl-tRNA(Thr).</text>
</comment>
<comment type="catalytic activity">
    <reaction evidence="1">
        <text>tRNA(Thr) + L-threonine + ATP = L-threonyl-tRNA(Thr) + AMP + diphosphate + H(+)</text>
        <dbReference type="Rhea" id="RHEA:24624"/>
        <dbReference type="Rhea" id="RHEA-COMP:9670"/>
        <dbReference type="Rhea" id="RHEA-COMP:9704"/>
        <dbReference type="ChEBI" id="CHEBI:15378"/>
        <dbReference type="ChEBI" id="CHEBI:30616"/>
        <dbReference type="ChEBI" id="CHEBI:33019"/>
        <dbReference type="ChEBI" id="CHEBI:57926"/>
        <dbReference type="ChEBI" id="CHEBI:78442"/>
        <dbReference type="ChEBI" id="CHEBI:78534"/>
        <dbReference type="ChEBI" id="CHEBI:456215"/>
        <dbReference type="EC" id="6.1.1.3"/>
    </reaction>
</comment>
<comment type="cofactor">
    <cofactor evidence="1">
        <name>Zn(2+)</name>
        <dbReference type="ChEBI" id="CHEBI:29105"/>
    </cofactor>
    <text evidence="1">Binds 1 zinc ion per subunit.</text>
</comment>
<comment type="subunit">
    <text evidence="1">Homodimer.</text>
</comment>
<comment type="subcellular location">
    <subcellularLocation>
        <location evidence="1">Cytoplasm</location>
    </subcellularLocation>
</comment>
<comment type="similarity">
    <text evidence="1">Belongs to the class-II aminoacyl-tRNA synthetase family.</text>
</comment>
<evidence type="ECO:0000255" key="1">
    <source>
        <dbReference type="HAMAP-Rule" id="MF_00184"/>
    </source>
</evidence>
<evidence type="ECO:0000255" key="2">
    <source>
        <dbReference type="PROSITE-ProRule" id="PRU01228"/>
    </source>
</evidence>
<feature type="chain" id="PRO_0000100965" description="Threonine--tRNA ligase">
    <location>
        <begin position="1"/>
        <end position="637"/>
    </location>
</feature>
<feature type="domain" description="TGS" evidence="2">
    <location>
        <begin position="1"/>
        <end position="61"/>
    </location>
</feature>
<feature type="region of interest" description="Catalytic" evidence="1">
    <location>
        <begin position="242"/>
        <end position="532"/>
    </location>
</feature>
<feature type="binding site" evidence="1">
    <location>
        <position position="333"/>
    </location>
    <ligand>
        <name>Zn(2+)</name>
        <dbReference type="ChEBI" id="CHEBI:29105"/>
    </ligand>
</feature>
<feature type="binding site" evidence="1">
    <location>
        <position position="384"/>
    </location>
    <ligand>
        <name>Zn(2+)</name>
        <dbReference type="ChEBI" id="CHEBI:29105"/>
    </ligand>
</feature>
<feature type="binding site" evidence="1">
    <location>
        <position position="509"/>
    </location>
    <ligand>
        <name>Zn(2+)</name>
        <dbReference type="ChEBI" id="CHEBI:29105"/>
    </ligand>
</feature>
<name>SYT_CLOAB</name>